<gene>
    <name type="primary">lsrC</name>
    <name type="ordered locus">KPN78578_34770</name>
    <name type="ORF">KPN_03506</name>
</gene>
<reference key="1">
    <citation type="submission" date="2006-09" db="EMBL/GenBank/DDBJ databases">
        <authorList>
            <consortium name="The Klebsiella pneumonia Genome Sequencing Project"/>
            <person name="McClelland M."/>
            <person name="Sanderson E.K."/>
            <person name="Spieth J."/>
            <person name="Clifton W.S."/>
            <person name="Latreille P."/>
            <person name="Sabo A."/>
            <person name="Pepin K."/>
            <person name="Bhonagiri V."/>
            <person name="Porwollik S."/>
            <person name="Ali J."/>
            <person name="Wilson R.K."/>
        </authorList>
    </citation>
    <scope>NUCLEOTIDE SEQUENCE [LARGE SCALE GENOMIC DNA]</scope>
    <source>
        <strain>ATCC 700721 / MGH 78578</strain>
    </source>
</reference>
<accession>A6TEB7</accession>
<protein>
    <recommendedName>
        <fullName>Autoinducer 2 import system permease protein LsrC</fullName>
        <shortName>AI-2 import system permease protein LsrC</shortName>
    </recommendedName>
</protein>
<evidence type="ECO:0000250" key="1"/>
<evidence type="ECO:0000255" key="2"/>
<evidence type="ECO:0000256" key="3">
    <source>
        <dbReference type="SAM" id="MobiDB-lite"/>
    </source>
</evidence>
<evidence type="ECO:0000305" key="4"/>
<proteinExistence type="inferred from homology"/>
<dbReference type="EMBL" id="CP000647">
    <property type="protein sequence ID" value="ABR78901.1"/>
    <property type="molecule type" value="Genomic_DNA"/>
</dbReference>
<dbReference type="RefSeq" id="WP_015959043.1">
    <property type="nucleotide sequence ID" value="NC_009648.1"/>
</dbReference>
<dbReference type="STRING" id="272620.KPN_03506"/>
<dbReference type="PaxDb" id="272620-KPN_03506"/>
<dbReference type="EnsemblBacteria" id="ABR78901">
    <property type="protein sequence ID" value="ABR78901"/>
    <property type="gene ID" value="KPN_03506"/>
</dbReference>
<dbReference type="KEGG" id="kpn:KPN_03506"/>
<dbReference type="HOGENOM" id="CLU_028880_0_1_6"/>
<dbReference type="Proteomes" id="UP000000265">
    <property type="component" value="Chromosome"/>
</dbReference>
<dbReference type="GO" id="GO:0005886">
    <property type="term" value="C:plasma membrane"/>
    <property type="evidence" value="ECO:0007669"/>
    <property type="project" value="UniProtKB-SubCell"/>
</dbReference>
<dbReference type="GO" id="GO:0022857">
    <property type="term" value="F:transmembrane transporter activity"/>
    <property type="evidence" value="ECO:0007669"/>
    <property type="project" value="InterPro"/>
</dbReference>
<dbReference type="CDD" id="cd06579">
    <property type="entry name" value="TM_PBP1_transp_AraH_like"/>
    <property type="match status" value="1"/>
</dbReference>
<dbReference type="InterPro" id="IPR001851">
    <property type="entry name" value="ABC_transp_permease"/>
</dbReference>
<dbReference type="NCBIfam" id="NF011961">
    <property type="entry name" value="PRK15432.1"/>
    <property type="match status" value="1"/>
</dbReference>
<dbReference type="PANTHER" id="PTHR32196">
    <property type="entry name" value="ABC TRANSPORTER PERMEASE PROTEIN YPHD-RELATED-RELATED"/>
    <property type="match status" value="1"/>
</dbReference>
<dbReference type="PANTHER" id="PTHR32196:SF29">
    <property type="entry name" value="AUTOINDUCER 2 IMPORT SYSTEM PERMEASE PROTEIN LSRC"/>
    <property type="match status" value="1"/>
</dbReference>
<dbReference type="Pfam" id="PF02653">
    <property type="entry name" value="BPD_transp_2"/>
    <property type="match status" value="1"/>
</dbReference>
<feature type="chain" id="PRO_0000351342" description="Autoinducer 2 import system permease protein LsrC">
    <location>
        <begin position="1"/>
        <end position="344"/>
    </location>
</feature>
<feature type="transmembrane region" description="Helical" evidence="2">
    <location>
        <begin position="13"/>
        <end position="33"/>
    </location>
</feature>
<feature type="transmembrane region" description="Helical" evidence="2">
    <location>
        <begin position="38"/>
        <end position="58"/>
    </location>
</feature>
<feature type="transmembrane region" description="Helical" evidence="2">
    <location>
        <begin position="69"/>
        <end position="89"/>
    </location>
</feature>
<feature type="transmembrane region" description="Helical" evidence="2">
    <location>
        <begin position="90"/>
        <end position="110"/>
    </location>
</feature>
<feature type="transmembrane region" description="Helical" evidence="2">
    <location>
        <begin position="114"/>
        <end position="134"/>
    </location>
</feature>
<feature type="transmembrane region" description="Helical" evidence="2">
    <location>
        <begin position="155"/>
        <end position="175"/>
    </location>
</feature>
<feature type="transmembrane region" description="Helical" evidence="2">
    <location>
        <begin position="212"/>
        <end position="232"/>
    </location>
</feature>
<feature type="transmembrane region" description="Helical" evidence="2">
    <location>
        <begin position="251"/>
        <end position="271"/>
    </location>
</feature>
<feature type="transmembrane region" description="Helical" evidence="2">
    <location>
        <begin position="283"/>
        <end position="303"/>
    </location>
</feature>
<feature type="region of interest" description="Disordered" evidence="3">
    <location>
        <begin position="323"/>
        <end position="344"/>
    </location>
</feature>
<feature type="compositionally biased region" description="Basic and acidic residues" evidence="3">
    <location>
        <begin position="335"/>
        <end position="344"/>
    </location>
</feature>
<keyword id="KW-0997">Cell inner membrane</keyword>
<keyword id="KW-1003">Cell membrane</keyword>
<keyword id="KW-0472">Membrane</keyword>
<keyword id="KW-0812">Transmembrane</keyword>
<keyword id="KW-1133">Transmembrane helix</keyword>
<keyword id="KW-0813">Transport</keyword>
<comment type="function">
    <text evidence="1">Part of the ABC transporter complex LsrABCD involved in autoinducer 2 (AI-2) import. Probably responsible for the translocation of the substrate across the membrane (By similarity).</text>
</comment>
<comment type="subunit">
    <text evidence="1">The complex is composed of two ATP-binding proteins (LsrA), two transmembrane proteins (LsrC and LsrD) and a solute-binding protein (LsrB).</text>
</comment>
<comment type="subcellular location">
    <subcellularLocation>
        <location evidence="1">Cell inner membrane</location>
        <topology evidence="1">Multi-pass membrane protein</topology>
    </subcellularLocation>
</comment>
<comment type="similarity">
    <text evidence="4">Belongs to the binding-protein-dependent transport system permease family. AraH/RbsC subfamily.</text>
</comment>
<name>LSRC_KLEP7</name>
<sequence length="344" mass="36171">MKTLLKNRELSAFFAIVALFVVLVALNPAYFILQTLAMIFASSQILCLLALGATLVMLTRNIDVSVGSTVGLCAIAVGVALNYGYGLATAIAFALAIGALAGAFNGLLVVGLRIPAIVATLGTLGLYRGVMLLWTGGKWIEGLPDSLKSLSEPAFIGVSPLGWLVLALLLAGGWLLSRTAFGRDFYAVGDNLAAARQLGVAVNRTRMLAFTLNGMLAACAGIVFAAQIGFVPNQTGSGLEMKAIAACVLGGISLLGGTGTLLGAFLGAFFLTQIDTVLVLFRLPAWWNDFIAGLVLLGVLVLDGRLRQALARHQRALKYSRFQPGNKGSKQVARFPERKSKEVA</sequence>
<organism>
    <name type="scientific">Klebsiella pneumoniae subsp. pneumoniae (strain ATCC 700721 / MGH 78578)</name>
    <dbReference type="NCBI Taxonomy" id="272620"/>
    <lineage>
        <taxon>Bacteria</taxon>
        <taxon>Pseudomonadati</taxon>
        <taxon>Pseudomonadota</taxon>
        <taxon>Gammaproteobacteria</taxon>
        <taxon>Enterobacterales</taxon>
        <taxon>Enterobacteriaceae</taxon>
        <taxon>Klebsiella/Raoultella group</taxon>
        <taxon>Klebsiella</taxon>
        <taxon>Klebsiella pneumoniae complex</taxon>
    </lineage>
</organism>